<proteinExistence type="evidence at transcript level"/>
<keyword id="KW-0156">Chromatin regulator</keyword>
<keyword id="KW-0378">Hydrolase</keyword>
<keyword id="KW-0479">Metal-binding</keyword>
<keyword id="KW-0539">Nucleus</keyword>
<keyword id="KW-1185">Reference proteome</keyword>
<keyword id="KW-0678">Repressor</keyword>
<keyword id="KW-0804">Transcription</keyword>
<keyword id="KW-0805">Transcription regulation</keyword>
<keyword id="KW-0862">Zinc</keyword>
<evidence type="ECO:0000250" key="1">
    <source>
        <dbReference type="UniProtKB" id="O15379"/>
    </source>
</evidence>
<evidence type="ECO:0000250" key="2">
    <source>
        <dbReference type="UniProtKB" id="O42227"/>
    </source>
</evidence>
<evidence type="ECO:0000250" key="3">
    <source>
        <dbReference type="UniProtKB" id="Q13547"/>
    </source>
</evidence>
<evidence type="ECO:0000256" key="4">
    <source>
        <dbReference type="SAM" id="MobiDB-lite"/>
    </source>
</evidence>
<evidence type="ECO:0000305" key="5"/>
<dbReference type="EC" id="3.5.1.98" evidence="3"/>
<dbReference type="EC" id="3.5.1.-" evidence="3"/>
<dbReference type="EMBL" id="AF039751">
    <property type="protein sequence ID" value="AAB96923.1"/>
    <property type="molecule type" value="mRNA"/>
</dbReference>
<dbReference type="EMBL" id="AF043328">
    <property type="protein sequence ID" value="AAB99850.1"/>
    <property type="molecule type" value="mRNA"/>
</dbReference>
<dbReference type="EMBL" id="AF044169">
    <property type="protein sequence ID" value="AAC00504.1"/>
    <property type="molecule type" value="mRNA"/>
</dbReference>
<dbReference type="RefSeq" id="NP_989487.1">
    <property type="nucleotide sequence ID" value="NM_204156.2"/>
</dbReference>
<dbReference type="SMR" id="P56517"/>
<dbReference type="BioGRID" id="675010">
    <property type="interactions" value="2"/>
</dbReference>
<dbReference type="FunCoup" id="P56517">
    <property type="interactions" value="2962"/>
</dbReference>
<dbReference type="STRING" id="9031.ENSGALP00000059784"/>
<dbReference type="iPTMnet" id="P56517"/>
<dbReference type="PaxDb" id="9031-ENSGALP00000005212"/>
<dbReference type="Ensembl" id="ENSGALT00010042088.1">
    <property type="protein sequence ID" value="ENSGALP00010024643.1"/>
    <property type="gene ID" value="ENSGALG00010017415.1"/>
</dbReference>
<dbReference type="GeneID" id="373961"/>
<dbReference type="KEGG" id="gga:373961"/>
<dbReference type="CTD" id="3065"/>
<dbReference type="VEuPathDB" id="HostDB:geneid_373961"/>
<dbReference type="eggNOG" id="KOG1342">
    <property type="taxonomic scope" value="Eukaryota"/>
</dbReference>
<dbReference type="GeneTree" id="ENSGT00940000154301"/>
<dbReference type="HOGENOM" id="CLU_007727_7_4_1"/>
<dbReference type="InParanoid" id="P56517"/>
<dbReference type="OMA" id="EHRWDKH"/>
<dbReference type="OrthoDB" id="1918432at2759"/>
<dbReference type="PhylomeDB" id="P56517"/>
<dbReference type="TreeFam" id="TF106171"/>
<dbReference type="BRENDA" id="3.5.1.98">
    <property type="organism ID" value="1306"/>
</dbReference>
<dbReference type="Reactome" id="R-GGA-1538133">
    <property type="pathway name" value="G0 and Early G1"/>
</dbReference>
<dbReference type="Reactome" id="R-GGA-201722">
    <property type="pathway name" value="Formation of the beta-catenin:TCF transactivating complex"/>
</dbReference>
<dbReference type="Reactome" id="R-GGA-3214815">
    <property type="pathway name" value="HDACs deacetylate histones"/>
</dbReference>
<dbReference type="Reactome" id="R-GGA-350054">
    <property type="pathway name" value="Notch-HLH transcription pathway"/>
</dbReference>
<dbReference type="Reactome" id="R-GGA-3769402">
    <property type="pathway name" value="Deactivation of the beta-catenin transactivating complex"/>
</dbReference>
<dbReference type="Reactome" id="R-GGA-4551638">
    <property type="pathway name" value="SUMOylation of chromatin organization proteins"/>
</dbReference>
<dbReference type="Reactome" id="R-GGA-73762">
    <property type="pathway name" value="RNA Polymerase I Transcription Initiation"/>
</dbReference>
<dbReference type="Reactome" id="R-GGA-8936459">
    <property type="pathway name" value="RUNX1 regulates genes involved in megakaryocyte differentiation and platelet function"/>
</dbReference>
<dbReference type="Reactome" id="R-GGA-8943724">
    <property type="pathway name" value="Regulation of PTEN gene transcription"/>
</dbReference>
<dbReference type="Reactome" id="R-GGA-9018519">
    <property type="pathway name" value="Estrogen-dependent gene expression"/>
</dbReference>
<dbReference type="Reactome" id="R-GGA-9701898">
    <property type="pathway name" value="STAT3 nuclear events downstream of ALK signaling"/>
</dbReference>
<dbReference type="Reactome" id="R-GGA-9824594">
    <property type="pathway name" value="Regulation of MITF-M-dependent genes involved in apoptosis"/>
</dbReference>
<dbReference type="Reactome" id="R-GGA-9825892">
    <property type="pathway name" value="Regulation of MITF-M-dependent genes involved in cell cycle and proliferation"/>
</dbReference>
<dbReference type="Reactome" id="R-GGA-983231">
    <property type="pathway name" value="Factors involved in megakaryocyte development and platelet production"/>
</dbReference>
<dbReference type="PRO" id="PR:P56517"/>
<dbReference type="Proteomes" id="UP000000539">
    <property type="component" value="Chromosome 23"/>
</dbReference>
<dbReference type="Bgee" id="ENSGALG00000003297">
    <property type="expression patterns" value="Expressed in colon and 13 other cell types or tissues"/>
</dbReference>
<dbReference type="GO" id="GO:0005737">
    <property type="term" value="C:cytoplasm"/>
    <property type="evidence" value="ECO:0000304"/>
    <property type="project" value="UniProtKB"/>
</dbReference>
<dbReference type="GO" id="GO:0005829">
    <property type="term" value="C:cytosol"/>
    <property type="evidence" value="ECO:0007669"/>
    <property type="project" value="Ensembl"/>
</dbReference>
<dbReference type="GO" id="GO:0000792">
    <property type="term" value="C:heterochromatin"/>
    <property type="evidence" value="ECO:0007669"/>
    <property type="project" value="Ensembl"/>
</dbReference>
<dbReference type="GO" id="GO:0000118">
    <property type="term" value="C:histone deacetylase complex"/>
    <property type="evidence" value="ECO:0000304"/>
    <property type="project" value="UniProtKB"/>
</dbReference>
<dbReference type="GO" id="GO:0043025">
    <property type="term" value="C:neuronal cell body"/>
    <property type="evidence" value="ECO:0007669"/>
    <property type="project" value="Ensembl"/>
</dbReference>
<dbReference type="GO" id="GO:0005634">
    <property type="term" value="C:nucleus"/>
    <property type="evidence" value="ECO:0000304"/>
    <property type="project" value="UniProtKB"/>
</dbReference>
<dbReference type="GO" id="GO:0016581">
    <property type="term" value="C:NuRD complex"/>
    <property type="evidence" value="ECO:0000318"/>
    <property type="project" value="GO_Central"/>
</dbReference>
<dbReference type="GO" id="GO:0070822">
    <property type="term" value="C:Sin3-type complex"/>
    <property type="evidence" value="ECO:0007669"/>
    <property type="project" value="Ensembl"/>
</dbReference>
<dbReference type="GO" id="GO:0017053">
    <property type="term" value="C:transcription repressor complex"/>
    <property type="evidence" value="ECO:0007669"/>
    <property type="project" value="Ensembl"/>
</dbReference>
<dbReference type="GO" id="GO:0140297">
    <property type="term" value="F:DNA-binding transcription factor binding"/>
    <property type="evidence" value="ECO:0000304"/>
    <property type="project" value="UniProtKB"/>
</dbReference>
<dbReference type="GO" id="GO:0070888">
    <property type="term" value="F:E-box binding"/>
    <property type="evidence" value="ECO:0007669"/>
    <property type="project" value="Ensembl"/>
</dbReference>
<dbReference type="GO" id="GO:0004407">
    <property type="term" value="F:histone deacetylase activity"/>
    <property type="evidence" value="ECO:0000250"/>
    <property type="project" value="UniProtKB"/>
</dbReference>
<dbReference type="GO" id="GO:0141221">
    <property type="term" value="F:histone deacetylase activity, hydrolytic mechanism"/>
    <property type="evidence" value="ECO:0007669"/>
    <property type="project" value="UniProtKB-EC"/>
</dbReference>
<dbReference type="GO" id="GO:0042826">
    <property type="term" value="F:histone deacetylase binding"/>
    <property type="evidence" value="ECO:0007669"/>
    <property type="project" value="Ensembl"/>
</dbReference>
<dbReference type="GO" id="GO:0160009">
    <property type="term" value="F:histone decrotonylase activity"/>
    <property type="evidence" value="ECO:0000250"/>
    <property type="project" value="UniProtKB"/>
</dbReference>
<dbReference type="GO" id="GO:0035851">
    <property type="term" value="F:Krueppel-associated box domain binding"/>
    <property type="evidence" value="ECO:0007669"/>
    <property type="project" value="Ensembl"/>
</dbReference>
<dbReference type="GO" id="GO:0046872">
    <property type="term" value="F:metal ion binding"/>
    <property type="evidence" value="ECO:0007669"/>
    <property type="project" value="UniProtKB-KW"/>
</dbReference>
<dbReference type="GO" id="GO:0051059">
    <property type="term" value="F:NF-kappaB binding"/>
    <property type="evidence" value="ECO:0007669"/>
    <property type="project" value="Ensembl"/>
</dbReference>
<dbReference type="GO" id="GO:0002039">
    <property type="term" value="F:p53 binding"/>
    <property type="evidence" value="ECO:0007669"/>
    <property type="project" value="Ensembl"/>
</dbReference>
<dbReference type="GO" id="GO:1990841">
    <property type="term" value="F:promoter-specific chromatin binding"/>
    <property type="evidence" value="ECO:0007669"/>
    <property type="project" value="Ensembl"/>
</dbReference>
<dbReference type="GO" id="GO:0033558">
    <property type="term" value="F:protein lysine deacetylase activity"/>
    <property type="evidence" value="ECO:0000250"/>
    <property type="project" value="UniProtKB"/>
</dbReference>
<dbReference type="GO" id="GO:0160216">
    <property type="term" value="F:protein lysine delactylase activity"/>
    <property type="evidence" value="ECO:0000250"/>
    <property type="project" value="UniProtKB"/>
</dbReference>
<dbReference type="GO" id="GO:0000979">
    <property type="term" value="F:RNA polymerase II core promoter sequence-specific DNA binding"/>
    <property type="evidence" value="ECO:0007669"/>
    <property type="project" value="Ensembl"/>
</dbReference>
<dbReference type="GO" id="GO:0003714">
    <property type="term" value="F:transcription corepressor activity"/>
    <property type="evidence" value="ECO:0007669"/>
    <property type="project" value="Ensembl"/>
</dbReference>
<dbReference type="GO" id="GO:0001222">
    <property type="term" value="F:transcription corepressor binding"/>
    <property type="evidence" value="ECO:0007669"/>
    <property type="project" value="Ensembl"/>
</dbReference>
<dbReference type="GO" id="GO:0006325">
    <property type="term" value="P:chromatin organization"/>
    <property type="evidence" value="ECO:0000304"/>
    <property type="project" value="UniProtKB"/>
</dbReference>
<dbReference type="GO" id="GO:0032922">
    <property type="term" value="P:circadian regulation of gene expression"/>
    <property type="evidence" value="ECO:0007669"/>
    <property type="project" value="Ensembl"/>
</dbReference>
<dbReference type="GO" id="GO:0006346">
    <property type="term" value="P:DNA methylation-dependent constitutive heterochromatin formation"/>
    <property type="evidence" value="ECO:0007669"/>
    <property type="project" value="Ensembl"/>
</dbReference>
<dbReference type="GO" id="GO:0042733">
    <property type="term" value="P:embryonic digit morphogenesis"/>
    <property type="evidence" value="ECO:0007669"/>
    <property type="project" value="Ensembl"/>
</dbReference>
<dbReference type="GO" id="GO:0007492">
    <property type="term" value="P:endoderm development"/>
    <property type="evidence" value="ECO:0007669"/>
    <property type="project" value="Ensembl"/>
</dbReference>
<dbReference type="GO" id="GO:0009913">
    <property type="term" value="P:epidermal cell differentiation"/>
    <property type="evidence" value="ECO:0007669"/>
    <property type="project" value="Ensembl"/>
</dbReference>
<dbReference type="GO" id="GO:0061029">
    <property type="term" value="P:eyelid development in camera-type eye"/>
    <property type="evidence" value="ECO:0007669"/>
    <property type="project" value="Ensembl"/>
</dbReference>
<dbReference type="GO" id="GO:0061198">
    <property type="term" value="P:fungiform papilla formation"/>
    <property type="evidence" value="ECO:0007669"/>
    <property type="project" value="Ensembl"/>
</dbReference>
<dbReference type="GO" id="GO:0031507">
    <property type="term" value="P:heterochromatin formation"/>
    <property type="evidence" value="ECO:0000318"/>
    <property type="project" value="GO_Central"/>
</dbReference>
<dbReference type="GO" id="GO:0043922">
    <property type="term" value="P:negative regulation by host of viral transcription"/>
    <property type="evidence" value="ECO:0007669"/>
    <property type="project" value="Ensembl"/>
</dbReference>
<dbReference type="GO" id="GO:0060766">
    <property type="term" value="P:negative regulation of androgen receptor signaling pathway"/>
    <property type="evidence" value="ECO:0007669"/>
    <property type="project" value="Ensembl"/>
</dbReference>
<dbReference type="GO" id="GO:0043124">
    <property type="term" value="P:negative regulation of canonical NF-kappaB signal transduction"/>
    <property type="evidence" value="ECO:0007669"/>
    <property type="project" value="Ensembl"/>
</dbReference>
<dbReference type="GO" id="GO:0090090">
    <property type="term" value="P:negative regulation of canonical Wnt signaling pathway"/>
    <property type="evidence" value="ECO:0007669"/>
    <property type="project" value="Ensembl"/>
</dbReference>
<dbReference type="GO" id="GO:2001243">
    <property type="term" value="P:negative regulation of intrinsic apoptotic signaling pathway"/>
    <property type="evidence" value="ECO:0007669"/>
    <property type="project" value="Ensembl"/>
</dbReference>
<dbReference type="GO" id="GO:0000122">
    <property type="term" value="P:negative regulation of transcription by RNA polymerase II"/>
    <property type="evidence" value="ECO:0007669"/>
    <property type="project" value="Ensembl"/>
</dbReference>
<dbReference type="GO" id="GO:0030182">
    <property type="term" value="P:neuron differentiation"/>
    <property type="evidence" value="ECO:0007669"/>
    <property type="project" value="Ensembl"/>
</dbReference>
<dbReference type="GO" id="GO:0048709">
    <property type="term" value="P:oligodendrocyte differentiation"/>
    <property type="evidence" value="ECO:0007669"/>
    <property type="project" value="Ensembl"/>
</dbReference>
<dbReference type="GO" id="GO:0008284">
    <property type="term" value="P:positive regulation of cell population proliferation"/>
    <property type="evidence" value="ECO:0007669"/>
    <property type="project" value="Ensembl"/>
</dbReference>
<dbReference type="GO" id="GO:0033148">
    <property type="term" value="P:positive regulation of intracellular estrogen receptor signaling pathway"/>
    <property type="evidence" value="ECO:0007669"/>
    <property type="project" value="Ensembl"/>
</dbReference>
<dbReference type="GO" id="GO:0048714">
    <property type="term" value="P:positive regulation of oligodendrocyte differentiation"/>
    <property type="evidence" value="ECO:0007669"/>
    <property type="project" value="Ensembl"/>
</dbReference>
<dbReference type="GO" id="GO:0045944">
    <property type="term" value="P:positive regulation of transcription by RNA polymerase II"/>
    <property type="evidence" value="ECO:0007669"/>
    <property type="project" value="Ensembl"/>
</dbReference>
<dbReference type="CDD" id="cd10010">
    <property type="entry name" value="HDAC1"/>
    <property type="match status" value="1"/>
</dbReference>
<dbReference type="FunFam" id="3.40.800.20:FF:000003">
    <property type="entry name" value="Histone deacetylase"/>
    <property type="match status" value="1"/>
</dbReference>
<dbReference type="Gene3D" id="3.40.800.20">
    <property type="entry name" value="Histone deacetylase domain"/>
    <property type="match status" value="1"/>
</dbReference>
<dbReference type="InterPro" id="IPR050284">
    <property type="entry name" value="HDAC_PDAC"/>
</dbReference>
<dbReference type="InterPro" id="IPR000286">
    <property type="entry name" value="His_deacetylse"/>
</dbReference>
<dbReference type="InterPro" id="IPR003084">
    <property type="entry name" value="His_deacetylse_1"/>
</dbReference>
<dbReference type="InterPro" id="IPR023801">
    <property type="entry name" value="His_deacetylse_dom"/>
</dbReference>
<dbReference type="InterPro" id="IPR037138">
    <property type="entry name" value="His_deacetylse_dom_sf"/>
</dbReference>
<dbReference type="InterPro" id="IPR023696">
    <property type="entry name" value="Ureohydrolase_dom_sf"/>
</dbReference>
<dbReference type="PANTHER" id="PTHR10625:SF49">
    <property type="entry name" value="HISTONE DEACETYLASE 1"/>
    <property type="match status" value="1"/>
</dbReference>
<dbReference type="PANTHER" id="PTHR10625">
    <property type="entry name" value="HISTONE DEACETYLASE HDAC1-RELATED"/>
    <property type="match status" value="1"/>
</dbReference>
<dbReference type="Pfam" id="PF00850">
    <property type="entry name" value="Hist_deacetyl"/>
    <property type="match status" value="1"/>
</dbReference>
<dbReference type="PIRSF" id="PIRSF037913">
    <property type="entry name" value="His_deacetylse_1"/>
    <property type="match status" value="1"/>
</dbReference>
<dbReference type="PRINTS" id="PR01270">
    <property type="entry name" value="HDASUPER"/>
</dbReference>
<dbReference type="PRINTS" id="PR01271">
    <property type="entry name" value="HISDACETLASE"/>
</dbReference>
<dbReference type="SUPFAM" id="SSF52768">
    <property type="entry name" value="Arginase/deacetylase"/>
    <property type="match status" value="1"/>
</dbReference>
<gene>
    <name type="primary">HDAC1</name>
    <name type="synonym">HDAC1A</name>
</gene>
<protein>
    <recommendedName>
        <fullName>Histone deacetylase 1</fullName>
        <shortName>HD1</shortName>
        <ecNumber evidence="3">3.5.1.98</ecNumber>
    </recommendedName>
    <alternativeName>
        <fullName>Protein deacetylase HDAC1</fullName>
        <ecNumber evidence="3">3.5.1.-</ecNumber>
    </alternativeName>
    <alternativeName>
        <fullName>Protein deacylase HDAC1</fullName>
        <ecNumber evidence="3">3.5.1.-</ecNumber>
    </alternativeName>
</protein>
<organism>
    <name type="scientific">Gallus gallus</name>
    <name type="common">Chicken</name>
    <dbReference type="NCBI Taxonomy" id="9031"/>
    <lineage>
        <taxon>Eukaryota</taxon>
        <taxon>Metazoa</taxon>
        <taxon>Chordata</taxon>
        <taxon>Craniata</taxon>
        <taxon>Vertebrata</taxon>
        <taxon>Euteleostomi</taxon>
        <taxon>Archelosauria</taxon>
        <taxon>Archosauria</taxon>
        <taxon>Dinosauria</taxon>
        <taxon>Saurischia</taxon>
        <taxon>Theropoda</taxon>
        <taxon>Coelurosauria</taxon>
        <taxon>Aves</taxon>
        <taxon>Neognathae</taxon>
        <taxon>Galloanserae</taxon>
        <taxon>Galliformes</taxon>
        <taxon>Phasianidae</taxon>
        <taxon>Phasianinae</taxon>
        <taxon>Gallus</taxon>
    </lineage>
</organism>
<reference key="1">
    <citation type="submission" date="1997-12" db="EMBL/GenBank/DDBJ databases">
        <authorList>
            <person name="Takami Y."/>
        </authorList>
    </citation>
    <scope>NUCLEOTIDE SEQUENCE [MRNA]</scope>
</reference>
<reference key="2">
    <citation type="submission" date="1998-02" db="EMBL/GenBank/DDBJ databases">
        <authorList>
            <person name="Sun J.M."/>
            <person name="Chen H.Y."/>
            <person name="Davie J.R."/>
        </authorList>
    </citation>
    <scope>NUCLEOTIDE SEQUENCE [MRNA]</scope>
</reference>
<sequence length="480" mass="54939">MALTQGTKRKVCYYYDGDVGNYYYGQGHPMKPHRIRMTHNLLLNYGLYRKMEIYRPHKANAEEMTKYHSDDYIKFLRSIRPDNMSEYSKQMQRFNVGEDCPVFDGLFEFCQLSAGGSVASAVKLNKQQTDIAVNWAGGLHHAKKSEASGFCYVNDIVLAILELLKYHQRVLYIDIDIHHGDGVEEAFYTTDRVMTVSFHKYGEYFPGTGDLRDIGAGKGKYYAVNYPLRDGIDDESYEAIFKPVISKVMETFQPSAVVLQCGSDSLSGDRLGCFNLTIKGHAKCVEFVKSFNLPMLMLGGGGYTIRNVARCWTYETAVALDTEIPNELPYNDYFEYFGPDFKLHISPSNMTNQNTNEYLEKIKQRLFENLRMLPHAPGVQMQPIPEDAVQEDSGDEEEEDPEKRISIRNSDKRISCDEEFSDSEDEGEGGRKNVANFKKAKRVKTEEEKEEEEKKDEKEEEKAKEEKAEPKGVKEETKST</sequence>
<name>HDAC1_CHICK</name>
<accession>P56517</accession>
<feature type="chain" id="PRO_0000114689" description="Histone deacetylase 1">
    <location>
        <begin position="1"/>
        <end position="480"/>
    </location>
</feature>
<feature type="region of interest" description="Histone deacetylase">
    <location>
        <begin position="9"/>
        <end position="321"/>
    </location>
</feature>
<feature type="region of interest" description="Disordered" evidence="4">
    <location>
        <begin position="376"/>
        <end position="480"/>
    </location>
</feature>
<feature type="compositionally biased region" description="Acidic residues" evidence="4">
    <location>
        <begin position="388"/>
        <end position="400"/>
    </location>
</feature>
<feature type="compositionally biased region" description="Basic and acidic residues" evidence="4">
    <location>
        <begin position="401"/>
        <end position="416"/>
    </location>
</feature>
<feature type="compositionally biased region" description="Acidic residues" evidence="4">
    <location>
        <begin position="417"/>
        <end position="427"/>
    </location>
</feature>
<feature type="compositionally biased region" description="Basic and acidic residues" evidence="4">
    <location>
        <begin position="455"/>
        <end position="480"/>
    </location>
</feature>
<feature type="active site" evidence="3">
    <location>
        <position position="141"/>
    </location>
</feature>
<feature type="binding site" evidence="1">
    <location>
        <position position="27"/>
    </location>
    <ligand>
        <name>1D-myo-inositol 1,4,5,6-tetrakisphosphate</name>
        <dbReference type="ChEBI" id="CHEBI:57627"/>
    </ligand>
</feature>
<feature type="binding site" evidence="1">
    <location>
        <position position="31"/>
    </location>
    <ligand>
        <name>1D-myo-inositol 1,4,5,6-tetrakisphosphate</name>
        <dbReference type="ChEBI" id="CHEBI:57627"/>
    </ligand>
</feature>
<feature type="binding site" evidence="1">
    <location>
        <position position="176"/>
    </location>
    <ligand>
        <name>Zn(2+)</name>
        <dbReference type="ChEBI" id="CHEBI:29105"/>
    </ligand>
</feature>
<feature type="binding site" evidence="1">
    <location>
        <position position="178"/>
    </location>
    <ligand>
        <name>Zn(2+)</name>
        <dbReference type="ChEBI" id="CHEBI:29105"/>
    </ligand>
</feature>
<feature type="binding site" evidence="1">
    <location>
        <position position="264"/>
    </location>
    <ligand>
        <name>Zn(2+)</name>
        <dbReference type="ChEBI" id="CHEBI:29105"/>
    </ligand>
</feature>
<feature type="binding site" evidence="1">
    <location>
        <position position="270"/>
    </location>
    <ligand>
        <name>1D-myo-inositol 1,4,5,6-tetrakisphosphate</name>
        <dbReference type="ChEBI" id="CHEBI:57627"/>
    </ligand>
</feature>
<feature type="sequence conflict" description="In Ref. 2; AAB99850." evidence="5" ref="2">
    <original>LT</original>
    <variation>VM</variation>
    <location>
        <begin position="3"/>
        <end position="4"/>
    </location>
</feature>
<comment type="function">
    <text evidence="2 3">Histone deacetylase that catalyzes the deacetylation of lysine residues on the N-terminal part of the core histones (H2A, H2B, H3 and H4) (By similarity). Histone deacetylation gives a tag for epigenetic repression and plays an important role in transcriptional regulation, cell cycle progression and developmental events (By similarity). Histone deacetylases act via the formation of large multiprotein complexes (By similarity). Also functions as a deacetylase for non-histone proteins. In addition to protein deacetylase activity, also has protein-lysine deacylase activity: acts as a protein decrotonylase and delactylase by mediating decrotonylation ((2E)-butenoyl) and delactylation (lactoyl) of histones, respectively (By similarity).</text>
</comment>
<comment type="catalytic activity">
    <reaction evidence="3">
        <text>N(6)-acetyl-L-lysyl-[histone] + H2O = L-lysyl-[histone] + acetate</text>
        <dbReference type="Rhea" id="RHEA:58196"/>
        <dbReference type="Rhea" id="RHEA-COMP:9845"/>
        <dbReference type="Rhea" id="RHEA-COMP:11338"/>
        <dbReference type="ChEBI" id="CHEBI:15377"/>
        <dbReference type="ChEBI" id="CHEBI:29969"/>
        <dbReference type="ChEBI" id="CHEBI:30089"/>
        <dbReference type="ChEBI" id="CHEBI:61930"/>
        <dbReference type="EC" id="3.5.1.98"/>
    </reaction>
    <physiologicalReaction direction="left-to-right" evidence="3">
        <dbReference type="Rhea" id="RHEA:58197"/>
    </physiologicalReaction>
</comment>
<comment type="catalytic activity">
    <reaction evidence="3">
        <text>N(6)-acetyl-L-lysyl-[protein] + H2O = L-lysyl-[protein] + acetate</text>
        <dbReference type="Rhea" id="RHEA:58108"/>
        <dbReference type="Rhea" id="RHEA-COMP:9752"/>
        <dbReference type="Rhea" id="RHEA-COMP:10731"/>
        <dbReference type="ChEBI" id="CHEBI:15377"/>
        <dbReference type="ChEBI" id="CHEBI:29969"/>
        <dbReference type="ChEBI" id="CHEBI:30089"/>
        <dbReference type="ChEBI" id="CHEBI:61930"/>
    </reaction>
    <physiologicalReaction direction="left-to-right" evidence="3">
        <dbReference type="Rhea" id="RHEA:58109"/>
    </physiologicalReaction>
</comment>
<comment type="catalytic activity">
    <reaction evidence="3">
        <text>N(6)-(2E)-butenoyl-L-lysyl-[protein] + H2O = (2E)-2-butenoate + L-lysyl-[protein]</text>
        <dbReference type="Rhea" id="RHEA:69172"/>
        <dbReference type="Rhea" id="RHEA-COMP:9752"/>
        <dbReference type="Rhea" id="RHEA-COMP:13707"/>
        <dbReference type="ChEBI" id="CHEBI:15377"/>
        <dbReference type="ChEBI" id="CHEBI:29969"/>
        <dbReference type="ChEBI" id="CHEBI:35899"/>
        <dbReference type="ChEBI" id="CHEBI:137954"/>
    </reaction>
    <physiologicalReaction direction="left-to-right" evidence="3">
        <dbReference type="Rhea" id="RHEA:69173"/>
    </physiologicalReaction>
</comment>
<comment type="catalytic activity">
    <reaction evidence="3">
        <text>N(6)-[(S)-lactoyl]-L-lysyl-[protein] + H2O = (S)-lactate + L-lysyl-[protein]</text>
        <dbReference type="Rhea" id="RHEA:81387"/>
        <dbReference type="Rhea" id="RHEA-COMP:9752"/>
        <dbReference type="Rhea" id="RHEA-COMP:19466"/>
        <dbReference type="ChEBI" id="CHEBI:15377"/>
        <dbReference type="ChEBI" id="CHEBI:16651"/>
        <dbReference type="ChEBI" id="CHEBI:29969"/>
        <dbReference type="ChEBI" id="CHEBI:231527"/>
    </reaction>
    <physiologicalReaction direction="left-to-right" evidence="3">
        <dbReference type="Rhea" id="RHEA:81388"/>
    </physiologicalReaction>
</comment>
<comment type="cofactor">
    <cofactor evidence="1">
        <name>Zn(2+)</name>
        <dbReference type="ChEBI" id="CHEBI:29105"/>
    </cofactor>
</comment>
<comment type="activity regulation">
    <text evidence="1">Inositol tetraphosphate (1D-myo-inositol 1,4,5,6-tetrakisphosphate) may act as an intermolecular glue between HDAC1 and N-Cor repressor complex components.</text>
</comment>
<comment type="subcellular location">
    <subcellularLocation>
        <location evidence="3">Nucleus</location>
    </subcellularLocation>
</comment>
<comment type="similarity">
    <text evidence="5">Belongs to the histone deacetylase family. HD type 1 subfamily.</text>
</comment>